<accession>P49196</accession>
<protein>
    <recommendedName>
        <fullName evidence="4">Small ribosomal subunit protein eS12</fullName>
    </recommendedName>
    <alternativeName>
        <fullName>40S ribosomal protein S12</fullName>
    </alternativeName>
</protein>
<gene>
    <name type="primary">rps-12</name>
    <name type="ORF">F54E7.2</name>
</gene>
<feature type="chain" id="PRO_0000122329" description="Small ribosomal subunit protein eS12">
    <location>
        <begin position="1"/>
        <end position="140"/>
    </location>
</feature>
<proteinExistence type="evidence at protein level"/>
<dbReference type="EMBL" id="FO080172">
    <property type="protein sequence ID" value="CCD61763.1"/>
    <property type="molecule type" value="Genomic_DNA"/>
</dbReference>
<dbReference type="RefSeq" id="NP_498221.1">
    <property type="nucleotide sequence ID" value="NM_065820.8"/>
</dbReference>
<dbReference type="PDB" id="9BH5">
    <property type="method" value="EM"/>
    <property type="resolution" value="2.63 A"/>
    <property type="chains" value="AM=1-140"/>
</dbReference>
<dbReference type="PDB" id="9CAI">
    <property type="method" value="EM"/>
    <property type="resolution" value="2.59 A"/>
    <property type="chains" value="AM=1-140"/>
</dbReference>
<dbReference type="PDBsum" id="9BH5"/>
<dbReference type="PDBsum" id="9CAI"/>
<dbReference type="EMDB" id="EMD-44533"/>
<dbReference type="EMDB" id="EMD-45392"/>
<dbReference type="SMR" id="P49196"/>
<dbReference type="BioGRID" id="41013">
    <property type="interactions" value="101"/>
</dbReference>
<dbReference type="FunCoup" id="P49196">
    <property type="interactions" value="1880"/>
</dbReference>
<dbReference type="IntAct" id="P49196">
    <property type="interactions" value="1"/>
</dbReference>
<dbReference type="STRING" id="6239.F54E7.2.1"/>
<dbReference type="iPTMnet" id="P49196"/>
<dbReference type="PaxDb" id="6239-F54E7.2.3"/>
<dbReference type="PeptideAtlas" id="P49196"/>
<dbReference type="EnsemblMetazoa" id="F54E7.2.1">
    <property type="protein sequence ID" value="F54E7.2.1"/>
    <property type="gene ID" value="WBGene00004481"/>
</dbReference>
<dbReference type="EnsemblMetazoa" id="F54E7.2.2">
    <property type="protein sequence ID" value="F54E7.2.2"/>
    <property type="gene ID" value="WBGene00004481"/>
</dbReference>
<dbReference type="EnsemblMetazoa" id="F54E7.2.3">
    <property type="protein sequence ID" value="F54E7.2.3"/>
    <property type="gene ID" value="WBGene00004481"/>
</dbReference>
<dbReference type="EnsemblMetazoa" id="F54E7.2.4">
    <property type="protein sequence ID" value="F54E7.2.4"/>
    <property type="gene ID" value="WBGene00004481"/>
</dbReference>
<dbReference type="GeneID" id="175786"/>
<dbReference type="KEGG" id="cel:CELE_F54E7.2"/>
<dbReference type="UCSC" id="F54E7.2.1">
    <property type="organism name" value="c. elegans"/>
</dbReference>
<dbReference type="AGR" id="WB:WBGene00004481"/>
<dbReference type="CTD" id="175786"/>
<dbReference type="WormBase" id="F54E7.2">
    <property type="protein sequence ID" value="CE26896"/>
    <property type="gene ID" value="WBGene00004481"/>
    <property type="gene designation" value="rps-12"/>
</dbReference>
<dbReference type="eggNOG" id="KOG3406">
    <property type="taxonomic scope" value="Eukaryota"/>
</dbReference>
<dbReference type="GeneTree" id="ENSGT00390000018318"/>
<dbReference type="HOGENOM" id="CLU_110343_1_0_1"/>
<dbReference type="InParanoid" id="P49196"/>
<dbReference type="OMA" id="CAEHQIP"/>
<dbReference type="OrthoDB" id="10249311at2759"/>
<dbReference type="PhylomeDB" id="P49196"/>
<dbReference type="Reactome" id="R-CEL-156827">
    <property type="pathway name" value="L13a-mediated translational silencing of Ceruloplasmin expression"/>
</dbReference>
<dbReference type="Reactome" id="R-CEL-1799339">
    <property type="pathway name" value="SRP-dependent cotranslational protein targeting to membrane"/>
</dbReference>
<dbReference type="Reactome" id="R-CEL-72649">
    <property type="pathway name" value="Translation initiation complex formation"/>
</dbReference>
<dbReference type="Reactome" id="R-CEL-72689">
    <property type="pathway name" value="Formation of a pool of free 40S subunits"/>
</dbReference>
<dbReference type="Reactome" id="R-CEL-72695">
    <property type="pathway name" value="Formation of the ternary complex, and subsequently, the 43S complex"/>
</dbReference>
<dbReference type="Reactome" id="R-CEL-72702">
    <property type="pathway name" value="Ribosomal scanning and start codon recognition"/>
</dbReference>
<dbReference type="Reactome" id="R-CEL-72706">
    <property type="pathway name" value="GTP hydrolysis and joining of the 60S ribosomal subunit"/>
</dbReference>
<dbReference type="Reactome" id="R-CEL-975956">
    <property type="pathway name" value="Nonsense Mediated Decay (NMD) independent of the Exon Junction Complex (EJC)"/>
</dbReference>
<dbReference type="Reactome" id="R-CEL-975957">
    <property type="pathway name" value="Nonsense Mediated Decay (NMD) enhanced by the Exon Junction Complex (EJC)"/>
</dbReference>
<dbReference type="PRO" id="PR:P49196"/>
<dbReference type="Proteomes" id="UP000001940">
    <property type="component" value="Chromosome III"/>
</dbReference>
<dbReference type="Bgee" id="WBGene00004481">
    <property type="expression patterns" value="Expressed in larva and 3 other cell types or tissues"/>
</dbReference>
<dbReference type="GO" id="GO:0022627">
    <property type="term" value="C:cytosolic small ribosomal subunit"/>
    <property type="evidence" value="ECO:0000318"/>
    <property type="project" value="GO_Central"/>
</dbReference>
<dbReference type="GO" id="GO:0005730">
    <property type="term" value="C:nucleolus"/>
    <property type="evidence" value="ECO:0007669"/>
    <property type="project" value="UniProtKB-SubCell"/>
</dbReference>
<dbReference type="GO" id="GO:0032040">
    <property type="term" value="C:small-subunit processome"/>
    <property type="evidence" value="ECO:0000250"/>
    <property type="project" value="UniProtKB"/>
</dbReference>
<dbReference type="GO" id="GO:0003735">
    <property type="term" value="F:structural constituent of ribosome"/>
    <property type="evidence" value="ECO:0000318"/>
    <property type="project" value="GO_Central"/>
</dbReference>
<dbReference type="GO" id="GO:1990145">
    <property type="term" value="P:maintenance of translational fidelity"/>
    <property type="evidence" value="ECO:0000318"/>
    <property type="project" value="GO_Central"/>
</dbReference>
<dbReference type="GO" id="GO:0042274">
    <property type="term" value="P:ribosomal small subunit biogenesis"/>
    <property type="evidence" value="ECO:0000250"/>
    <property type="project" value="UniProtKB"/>
</dbReference>
<dbReference type="FunFam" id="3.30.1330.30:FF:000019">
    <property type="entry name" value="40S ribosomal protein S12"/>
    <property type="match status" value="1"/>
</dbReference>
<dbReference type="Gene3D" id="3.30.1330.30">
    <property type="match status" value="1"/>
</dbReference>
<dbReference type="InterPro" id="IPR029064">
    <property type="entry name" value="Ribosomal_eL30-like_sf"/>
</dbReference>
<dbReference type="InterPro" id="IPR004038">
    <property type="entry name" value="Ribosomal_eL8/eL30/eS12/Gad45"/>
</dbReference>
<dbReference type="InterPro" id="IPR000530">
    <property type="entry name" value="Ribosomal_eS12"/>
</dbReference>
<dbReference type="InterPro" id="IPR047860">
    <property type="entry name" value="Ribosomal_eS12_CS"/>
</dbReference>
<dbReference type="PANTHER" id="PTHR11843">
    <property type="entry name" value="40S RIBOSOMAL PROTEIN S12"/>
    <property type="match status" value="1"/>
</dbReference>
<dbReference type="Pfam" id="PF01248">
    <property type="entry name" value="Ribosomal_L7Ae"/>
    <property type="match status" value="1"/>
</dbReference>
<dbReference type="PRINTS" id="PR00972">
    <property type="entry name" value="RIBSOMALS12E"/>
</dbReference>
<dbReference type="SUPFAM" id="SSF55315">
    <property type="entry name" value="L30e-like"/>
    <property type="match status" value="1"/>
</dbReference>
<dbReference type="PROSITE" id="PS01189">
    <property type="entry name" value="RIBOSOMAL_S12E"/>
    <property type="match status" value="1"/>
</dbReference>
<name>RS12_CAEEL</name>
<organism>
    <name type="scientific">Caenorhabditis elegans</name>
    <dbReference type="NCBI Taxonomy" id="6239"/>
    <lineage>
        <taxon>Eukaryota</taxon>
        <taxon>Metazoa</taxon>
        <taxon>Ecdysozoa</taxon>
        <taxon>Nematoda</taxon>
        <taxon>Chromadorea</taxon>
        <taxon>Rhabditida</taxon>
        <taxon>Rhabditina</taxon>
        <taxon>Rhabditomorpha</taxon>
        <taxon>Rhabditoidea</taxon>
        <taxon>Rhabditidae</taxon>
        <taxon>Peloderinae</taxon>
        <taxon>Caenorhabditis</taxon>
    </lineage>
</organism>
<comment type="function">
    <text evidence="1 2 3">Part of the small subunit (SSU) processome, first precursor of the small eukaryotic ribosomal subunit. During the assembly of the SSU processome in the nucleolus, many ribosome biogenesis factors, an RNA chaperone and ribosomal proteins associate with the nascent pre-rRNA and work in concert to generate RNA folding, modifications, rearrangements and cleavage as well as targeted degradation of pre-ribosomal RNA by the RNA exosome (By similarity). Subunit of the 40S ribosomal complex (By similarity). Involved in cold-warm shock-induced translocation of the RNA exosome components from the nucleolus to nucleoplasm (PubMed:36763670).</text>
</comment>
<comment type="subunit">
    <text evidence="1 2">Part of the small subunit (SSU) processome, composed of more than 70 proteins and the RNA chaperone small nucleolar RNA (snoRNA) U3 (By similarity). Subunit of the 40S ribosomal complex (By similarity).</text>
</comment>
<comment type="subcellular location">
    <subcellularLocation>
        <location evidence="1">Nucleus</location>
        <location evidence="1">Nucleolus</location>
    </subcellularLocation>
</comment>
<comment type="similarity">
    <text evidence="4">Belongs to the eukaryotic ribosomal protein eS12 family.</text>
</comment>
<keyword id="KW-0002">3D-structure</keyword>
<keyword id="KW-0539">Nucleus</keyword>
<keyword id="KW-1185">Reference proteome</keyword>
<keyword id="KW-0687">Ribonucleoprotein</keyword>
<keyword id="KW-0689">Ribosomal protein</keyword>
<sequence length="140" mass="15069">MSDAGGDVQVAPAAVAQGPMDKEGALRAVLRAAHHADGLAKGLHETCKALDKREAHFCVLAENCDEPQYVKLVETLCAEHQIPLIKVADKKIIGEYCGLCKYDKEGKARKVVGCSSAVVTNWGNEEQGRAILTDYFASKN</sequence>
<evidence type="ECO:0000250" key="1">
    <source>
        <dbReference type="UniProtKB" id="P25398"/>
    </source>
</evidence>
<evidence type="ECO:0000250" key="2">
    <source>
        <dbReference type="UniProtKB" id="P80455"/>
    </source>
</evidence>
<evidence type="ECO:0000269" key="3">
    <source>
    </source>
</evidence>
<evidence type="ECO:0000305" key="4"/>
<reference key="1">
    <citation type="journal article" date="1998" name="Science">
        <title>Genome sequence of the nematode C. elegans: a platform for investigating biology.</title>
        <authorList>
            <consortium name="The C. elegans sequencing consortium"/>
        </authorList>
    </citation>
    <scope>NUCLEOTIDE SEQUENCE [LARGE SCALE GENOMIC DNA]</scope>
    <source>
        <strain>Bristol N2</strain>
    </source>
</reference>
<reference key="2">
    <citation type="journal article" date="2023" name="PLoS Genet.">
        <title>A ZTF-7/RPS-2 complex mediates the cold-warm response in C. elegans.</title>
        <authorList>
            <person name="Xu T."/>
            <person name="Liao S."/>
            <person name="Huang M."/>
            <person name="Zhu C."/>
            <person name="Huang X."/>
            <person name="Jin Q."/>
            <person name="Xu D."/>
            <person name="Fu C."/>
            <person name="Chen X."/>
            <person name="Feng X."/>
            <person name="Guang S."/>
        </authorList>
    </citation>
    <scope>FUNCTION</scope>
</reference>